<sequence length="423" mass="45937">MKAELIAVGTEILTGQIVNTNAQFLSEKMAELGIDVYFQTAVGDNEERLLSVITTASQRSDLVILCGGLGPTKDDLTKQTLAKYLRKDLVYDEQACQKLDDFFAKRKPSSRTPNNERQAQVIEGSIPLPNKTGLAVGGFITVDGISYVVLPGPPSELKSMVNEELVPLLSKQYSTLYSKVLRFFGVGESQLVTVLSDFIENQTDPTIAPYAKTGEVTLRLSTKTENQALADKKLGQLEAQLLSRKTLEGQPLADVFYGYGEDNSLARETFELLVKYDKTITAAESLTAGLFQSTLASFPGASQVFNGGFVAYSMEEKAKMLGLPLEELKSHGVVSAYTAEGMAEQARLLTGADIGVSLTGVAGPDMLEEQPAGTVFIGLATQNKVESIKVLISGRSRLDVRYIATLHAFNMVRKTLLKLENLL</sequence>
<organism>
    <name type="scientific">Streptococcus pyogenes serotype M12 (strain MGAS2096)</name>
    <dbReference type="NCBI Taxonomy" id="370553"/>
    <lineage>
        <taxon>Bacteria</taxon>
        <taxon>Bacillati</taxon>
        <taxon>Bacillota</taxon>
        <taxon>Bacilli</taxon>
        <taxon>Lactobacillales</taxon>
        <taxon>Streptococcaceae</taxon>
        <taxon>Streptococcus</taxon>
    </lineage>
</organism>
<comment type="similarity">
    <text evidence="1">Belongs to the CinA family.</text>
</comment>
<gene>
    <name evidence="1" type="primary">cinA</name>
    <name type="ordered locus">MGAS2096_Spy1833</name>
</gene>
<name>CINA_STRPB</name>
<feature type="chain" id="PRO_1000058731" description="Putative competence-damage inducible protein">
    <location>
        <begin position="1"/>
        <end position="423"/>
    </location>
</feature>
<dbReference type="EMBL" id="CP000261">
    <property type="protein sequence ID" value="ABF36885.1"/>
    <property type="molecule type" value="Genomic_DNA"/>
</dbReference>
<dbReference type="SMR" id="Q1J9C6"/>
<dbReference type="KEGG" id="spj:MGAS2096_Spy1833"/>
<dbReference type="HOGENOM" id="CLU_030805_9_3_9"/>
<dbReference type="CDD" id="cd00885">
    <property type="entry name" value="cinA"/>
    <property type="match status" value="1"/>
</dbReference>
<dbReference type="Gene3D" id="3.30.70.2860">
    <property type="match status" value="1"/>
</dbReference>
<dbReference type="Gene3D" id="3.90.950.20">
    <property type="entry name" value="CinA-like"/>
    <property type="match status" value="1"/>
</dbReference>
<dbReference type="Gene3D" id="3.40.980.10">
    <property type="entry name" value="MoaB/Mog-like domain"/>
    <property type="match status" value="1"/>
</dbReference>
<dbReference type="HAMAP" id="MF_00226_B">
    <property type="entry name" value="CinA_B"/>
    <property type="match status" value="1"/>
</dbReference>
<dbReference type="InterPro" id="IPR050101">
    <property type="entry name" value="CinA"/>
</dbReference>
<dbReference type="InterPro" id="IPR036653">
    <property type="entry name" value="CinA-like_C"/>
</dbReference>
<dbReference type="InterPro" id="IPR008136">
    <property type="entry name" value="CinA_C"/>
</dbReference>
<dbReference type="InterPro" id="IPR041424">
    <property type="entry name" value="CinA_KH"/>
</dbReference>
<dbReference type="InterPro" id="IPR008135">
    <property type="entry name" value="Competence-induced_CinA"/>
</dbReference>
<dbReference type="InterPro" id="IPR036425">
    <property type="entry name" value="MoaB/Mog-like_dom_sf"/>
</dbReference>
<dbReference type="InterPro" id="IPR001453">
    <property type="entry name" value="MoaB/Mog_dom"/>
</dbReference>
<dbReference type="NCBIfam" id="TIGR00200">
    <property type="entry name" value="cinA_nterm"/>
    <property type="match status" value="1"/>
</dbReference>
<dbReference type="NCBIfam" id="TIGR00177">
    <property type="entry name" value="molyb_syn"/>
    <property type="match status" value="1"/>
</dbReference>
<dbReference type="NCBIfam" id="TIGR00199">
    <property type="entry name" value="PncC_domain"/>
    <property type="match status" value="1"/>
</dbReference>
<dbReference type="NCBIfam" id="NF001813">
    <property type="entry name" value="PRK00549.1"/>
    <property type="match status" value="1"/>
</dbReference>
<dbReference type="PANTHER" id="PTHR13939">
    <property type="entry name" value="NICOTINAMIDE-NUCLEOTIDE AMIDOHYDROLASE PNCC"/>
    <property type="match status" value="1"/>
</dbReference>
<dbReference type="PANTHER" id="PTHR13939:SF0">
    <property type="entry name" value="NMN AMIDOHYDROLASE-LIKE PROTEIN YFAY"/>
    <property type="match status" value="1"/>
</dbReference>
<dbReference type="Pfam" id="PF02464">
    <property type="entry name" value="CinA"/>
    <property type="match status" value="1"/>
</dbReference>
<dbReference type="Pfam" id="PF18146">
    <property type="entry name" value="CinA_KH"/>
    <property type="match status" value="1"/>
</dbReference>
<dbReference type="Pfam" id="PF00994">
    <property type="entry name" value="MoCF_biosynth"/>
    <property type="match status" value="1"/>
</dbReference>
<dbReference type="PIRSF" id="PIRSF006728">
    <property type="entry name" value="CinA"/>
    <property type="match status" value="1"/>
</dbReference>
<dbReference type="SMART" id="SM00852">
    <property type="entry name" value="MoCF_biosynth"/>
    <property type="match status" value="1"/>
</dbReference>
<dbReference type="SUPFAM" id="SSF142433">
    <property type="entry name" value="CinA-like"/>
    <property type="match status" value="1"/>
</dbReference>
<dbReference type="SUPFAM" id="SSF53218">
    <property type="entry name" value="Molybdenum cofactor biosynthesis proteins"/>
    <property type="match status" value="1"/>
</dbReference>
<proteinExistence type="inferred from homology"/>
<protein>
    <recommendedName>
        <fullName evidence="1">Putative competence-damage inducible protein</fullName>
    </recommendedName>
</protein>
<reference key="1">
    <citation type="journal article" date="2006" name="Proc. Natl. Acad. Sci. U.S.A.">
        <title>Molecular genetic anatomy of inter- and intraserotype variation in the human bacterial pathogen group A Streptococcus.</title>
        <authorList>
            <person name="Beres S.B."/>
            <person name="Richter E.W."/>
            <person name="Nagiec M.J."/>
            <person name="Sumby P."/>
            <person name="Porcella S.F."/>
            <person name="DeLeo F.R."/>
            <person name="Musser J.M."/>
        </authorList>
    </citation>
    <scope>NUCLEOTIDE SEQUENCE [LARGE SCALE GENOMIC DNA]</scope>
    <source>
        <strain>MGAS2096</strain>
    </source>
</reference>
<accession>Q1J9C6</accession>
<evidence type="ECO:0000255" key="1">
    <source>
        <dbReference type="HAMAP-Rule" id="MF_00226"/>
    </source>
</evidence>